<feature type="chain" id="PRO_0000113819" description="Protein GrpE">
    <location>
        <begin position="1"/>
        <end position="227"/>
    </location>
</feature>
<feature type="region of interest" description="Disordered" evidence="2">
    <location>
        <begin position="1"/>
        <end position="57"/>
    </location>
</feature>
<feature type="region of interest" description="Disordered" evidence="2">
    <location>
        <begin position="193"/>
        <end position="227"/>
    </location>
</feature>
<feature type="compositionally biased region" description="Polar residues" evidence="2">
    <location>
        <begin position="1"/>
        <end position="18"/>
    </location>
</feature>
<feature type="compositionally biased region" description="Basic and acidic residues" evidence="2">
    <location>
        <begin position="19"/>
        <end position="35"/>
    </location>
</feature>
<feature type="compositionally biased region" description="Low complexity" evidence="2">
    <location>
        <begin position="41"/>
        <end position="50"/>
    </location>
</feature>
<feature type="compositionally biased region" description="Low complexity" evidence="2">
    <location>
        <begin position="199"/>
        <end position="213"/>
    </location>
</feature>
<keyword id="KW-0143">Chaperone</keyword>
<keyword id="KW-0963">Cytoplasm</keyword>
<keyword id="KW-1185">Reference proteome</keyword>
<keyword id="KW-0346">Stress response</keyword>
<comment type="function">
    <text evidence="1">Participates actively in the response to hyperosmotic and heat shock by preventing the aggregation of stress-denatured proteins, in association with DnaK and GrpE. It is the nucleotide exchange factor for DnaK and may function as a thermosensor. Unfolded proteins bind initially to DnaJ; upon interaction with the DnaJ-bound protein, DnaK hydrolyzes its bound ATP, resulting in the formation of a stable complex. GrpE releases ADP from DnaK; ATP binding to DnaK triggers the release of the substrate protein, thus completing the reaction cycle. Several rounds of ATP-dependent interactions between DnaJ, DnaK and GrpE are required for fully efficient folding.</text>
</comment>
<comment type="subunit">
    <text evidence="1">Homodimer.</text>
</comment>
<comment type="subcellular location">
    <subcellularLocation>
        <location evidence="1">Cytoplasm</location>
    </subcellularLocation>
</comment>
<comment type="similarity">
    <text evidence="1">Belongs to the GrpE family.</text>
</comment>
<protein>
    <recommendedName>
        <fullName evidence="1">Protein GrpE</fullName>
    </recommendedName>
    <alternativeName>
        <fullName evidence="1">HSP-70 cofactor</fullName>
    </alternativeName>
</protein>
<accession>Q73T78</accession>
<evidence type="ECO:0000255" key="1">
    <source>
        <dbReference type="HAMAP-Rule" id="MF_01151"/>
    </source>
</evidence>
<evidence type="ECO:0000256" key="2">
    <source>
        <dbReference type="SAM" id="MobiDB-lite"/>
    </source>
</evidence>
<proteinExistence type="inferred from homology"/>
<reference key="1">
    <citation type="journal article" date="2005" name="Proc. Natl. Acad. Sci. U.S.A.">
        <title>The complete genome sequence of Mycobacterium avium subspecies paratuberculosis.</title>
        <authorList>
            <person name="Li L."/>
            <person name="Bannantine J.P."/>
            <person name="Zhang Q."/>
            <person name="Amonsin A."/>
            <person name="May B.J."/>
            <person name="Alt D."/>
            <person name="Banerji N."/>
            <person name="Kanjilal S."/>
            <person name="Kapur V."/>
        </authorList>
    </citation>
    <scope>NUCLEOTIDE SEQUENCE [LARGE SCALE GENOMIC DNA]</scope>
    <source>
        <strain>ATCC BAA-968 / K-10</strain>
    </source>
</reference>
<sequence length="227" mass="23709">MTQGNQKTEGNPPEQVTVTDKRRIDPETGEVRHVPPGDTPGGTAPQAATAESGGAATDKVAELTADLQRVQADFANYRKRALRDQQAAADRAKAAVVNQLLGVLDDLERARKHGDLESGPLKSVADKLESALTGLGLTAFGEEGEEFDPVLHEAVQHEGDGSKPVIGTVMRQGYKLGDQVLRHALVGVVDTVTEEGDGEAAATDEPTAAAAETRPPESDDNAGASGD</sequence>
<organism>
    <name type="scientific">Mycolicibacterium paratuberculosis (strain ATCC BAA-968 / K-10)</name>
    <name type="common">Mycobacterium paratuberculosis</name>
    <dbReference type="NCBI Taxonomy" id="262316"/>
    <lineage>
        <taxon>Bacteria</taxon>
        <taxon>Bacillati</taxon>
        <taxon>Actinomycetota</taxon>
        <taxon>Actinomycetes</taxon>
        <taxon>Mycobacteriales</taxon>
        <taxon>Mycobacteriaceae</taxon>
        <taxon>Mycobacterium</taxon>
        <taxon>Mycobacterium avium complex (MAC)</taxon>
    </lineage>
</organism>
<dbReference type="EMBL" id="AE016958">
    <property type="protein sequence ID" value="AAS06391.1"/>
    <property type="molecule type" value="Genomic_DNA"/>
</dbReference>
<dbReference type="RefSeq" id="WP_003873872.1">
    <property type="nucleotide sequence ID" value="NZ_CP106873.1"/>
</dbReference>
<dbReference type="SMR" id="Q73T78"/>
<dbReference type="STRING" id="262316.MAP_3841"/>
<dbReference type="KEGG" id="mpa:MAP_3841"/>
<dbReference type="eggNOG" id="COG0576">
    <property type="taxonomic scope" value="Bacteria"/>
</dbReference>
<dbReference type="HOGENOM" id="CLU_057217_4_1_11"/>
<dbReference type="Proteomes" id="UP000000580">
    <property type="component" value="Chromosome"/>
</dbReference>
<dbReference type="GO" id="GO:0005737">
    <property type="term" value="C:cytoplasm"/>
    <property type="evidence" value="ECO:0007669"/>
    <property type="project" value="UniProtKB-SubCell"/>
</dbReference>
<dbReference type="GO" id="GO:0000774">
    <property type="term" value="F:adenyl-nucleotide exchange factor activity"/>
    <property type="evidence" value="ECO:0007669"/>
    <property type="project" value="InterPro"/>
</dbReference>
<dbReference type="GO" id="GO:0042803">
    <property type="term" value="F:protein homodimerization activity"/>
    <property type="evidence" value="ECO:0007669"/>
    <property type="project" value="InterPro"/>
</dbReference>
<dbReference type="GO" id="GO:0051087">
    <property type="term" value="F:protein-folding chaperone binding"/>
    <property type="evidence" value="ECO:0007669"/>
    <property type="project" value="InterPro"/>
</dbReference>
<dbReference type="GO" id="GO:0051082">
    <property type="term" value="F:unfolded protein binding"/>
    <property type="evidence" value="ECO:0007669"/>
    <property type="project" value="TreeGrafter"/>
</dbReference>
<dbReference type="GO" id="GO:0006457">
    <property type="term" value="P:protein folding"/>
    <property type="evidence" value="ECO:0007669"/>
    <property type="project" value="InterPro"/>
</dbReference>
<dbReference type="CDD" id="cd00446">
    <property type="entry name" value="GrpE"/>
    <property type="match status" value="1"/>
</dbReference>
<dbReference type="Gene3D" id="3.90.20.20">
    <property type="match status" value="1"/>
</dbReference>
<dbReference type="Gene3D" id="2.30.22.10">
    <property type="entry name" value="Head domain of nucleotide exchange factor GrpE"/>
    <property type="match status" value="1"/>
</dbReference>
<dbReference type="HAMAP" id="MF_01151">
    <property type="entry name" value="GrpE"/>
    <property type="match status" value="1"/>
</dbReference>
<dbReference type="InterPro" id="IPR000740">
    <property type="entry name" value="GrpE"/>
</dbReference>
<dbReference type="InterPro" id="IPR013805">
    <property type="entry name" value="GrpE_coiled_coil"/>
</dbReference>
<dbReference type="InterPro" id="IPR009012">
    <property type="entry name" value="GrpE_head"/>
</dbReference>
<dbReference type="NCBIfam" id="NF010740">
    <property type="entry name" value="PRK14142.1"/>
    <property type="match status" value="1"/>
</dbReference>
<dbReference type="NCBIfam" id="NF010761">
    <property type="entry name" value="PRK14164.1"/>
    <property type="match status" value="1"/>
</dbReference>
<dbReference type="PANTHER" id="PTHR21237">
    <property type="entry name" value="GRPE PROTEIN"/>
    <property type="match status" value="1"/>
</dbReference>
<dbReference type="PANTHER" id="PTHR21237:SF23">
    <property type="entry name" value="GRPE PROTEIN HOMOLOG, MITOCHONDRIAL"/>
    <property type="match status" value="1"/>
</dbReference>
<dbReference type="Pfam" id="PF01025">
    <property type="entry name" value="GrpE"/>
    <property type="match status" value="1"/>
</dbReference>
<dbReference type="PRINTS" id="PR00773">
    <property type="entry name" value="GRPEPROTEIN"/>
</dbReference>
<dbReference type="SUPFAM" id="SSF58014">
    <property type="entry name" value="Coiled-coil domain of nucleotide exchange factor GrpE"/>
    <property type="match status" value="1"/>
</dbReference>
<dbReference type="SUPFAM" id="SSF51064">
    <property type="entry name" value="Head domain of nucleotide exchange factor GrpE"/>
    <property type="match status" value="1"/>
</dbReference>
<dbReference type="PROSITE" id="PS01071">
    <property type="entry name" value="GRPE"/>
    <property type="match status" value="1"/>
</dbReference>
<name>GRPE_MYCPA</name>
<gene>
    <name evidence="1" type="primary">grpE</name>
    <name type="ordered locus">MAP_3841</name>
</gene>